<feature type="chain" id="PRO_0000367219" description="UPF0173 metal-dependent hydrolase MW1650">
    <location>
        <begin position="1"/>
        <end position="229"/>
    </location>
</feature>
<name>Y1650_STAAW</name>
<dbReference type="EMBL" id="BA000033">
    <property type="protein sequence ID" value="BAB95515.1"/>
    <property type="status" value="ALT_INIT"/>
    <property type="molecule type" value="Genomic_DNA"/>
</dbReference>
<dbReference type="RefSeq" id="WP_000777188.1">
    <property type="nucleotide sequence ID" value="NC_003923.1"/>
</dbReference>
<dbReference type="SMR" id="Q8NW56"/>
<dbReference type="KEGG" id="sam:MW1650"/>
<dbReference type="HOGENOM" id="CLU_070010_4_1_9"/>
<dbReference type="GO" id="GO:0016787">
    <property type="term" value="F:hydrolase activity"/>
    <property type="evidence" value="ECO:0007669"/>
    <property type="project" value="UniProtKB-UniRule"/>
</dbReference>
<dbReference type="CDD" id="cd06262">
    <property type="entry name" value="metallo-hydrolase-like_MBL-fold"/>
    <property type="match status" value="1"/>
</dbReference>
<dbReference type="Gene3D" id="3.60.15.10">
    <property type="entry name" value="Ribonuclease Z/Hydroxyacylglutathione hydrolase-like"/>
    <property type="match status" value="1"/>
</dbReference>
<dbReference type="HAMAP" id="MF_00457">
    <property type="entry name" value="UPF0173"/>
    <property type="match status" value="1"/>
</dbReference>
<dbReference type="InterPro" id="IPR001279">
    <property type="entry name" value="Metallo-B-lactamas"/>
</dbReference>
<dbReference type="InterPro" id="IPR036866">
    <property type="entry name" value="RibonucZ/Hydroxyglut_hydro"/>
</dbReference>
<dbReference type="InterPro" id="IPR022877">
    <property type="entry name" value="UPF0173"/>
</dbReference>
<dbReference type="InterPro" id="IPR050114">
    <property type="entry name" value="UPF0173_UPF0282_UlaG_hydrolase"/>
</dbReference>
<dbReference type="NCBIfam" id="NF001911">
    <property type="entry name" value="PRK00685.1"/>
    <property type="match status" value="1"/>
</dbReference>
<dbReference type="PANTHER" id="PTHR43546:SF3">
    <property type="entry name" value="UPF0173 METAL-DEPENDENT HYDROLASE MJ1163"/>
    <property type="match status" value="1"/>
</dbReference>
<dbReference type="PANTHER" id="PTHR43546">
    <property type="entry name" value="UPF0173 METAL-DEPENDENT HYDROLASE MJ1163-RELATED"/>
    <property type="match status" value="1"/>
</dbReference>
<dbReference type="Pfam" id="PF12706">
    <property type="entry name" value="Lactamase_B_2"/>
    <property type="match status" value="1"/>
</dbReference>
<dbReference type="SMART" id="SM00849">
    <property type="entry name" value="Lactamase_B"/>
    <property type="match status" value="1"/>
</dbReference>
<dbReference type="SUPFAM" id="SSF56281">
    <property type="entry name" value="Metallo-hydrolase/oxidoreductase"/>
    <property type="match status" value="1"/>
</dbReference>
<sequence>MKLSFHGQSTIYLEGNNKKVIVDPFISNNPKCDLNIETVQVDYIVLTHGHFDHFGDVVELAKKTGATVIGSAEMADYLSSYHGVENVHGMNIGGKANFDFGSVKFVQAFHSSSFTHENGIPVYLGMPMGIVFEVEGKTIYHTGDTGLFSDMSLIAKRHPVDVCFVPIGDNFTMGIDDASYAINEFIKPKISVPIHYDTFPLIEQDPQQFKDAVNVGDVQILKPGESVQF</sequence>
<organism>
    <name type="scientific">Staphylococcus aureus (strain MW2)</name>
    <dbReference type="NCBI Taxonomy" id="196620"/>
    <lineage>
        <taxon>Bacteria</taxon>
        <taxon>Bacillati</taxon>
        <taxon>Bacillota</taxon>
        <taxon>Bacilli</taxon>
        <taxon>Bacillales</taxon>
        <taxon>Staphylococcaceae</taxon>
        <taxon>Staphylococcus</taxon>
    </lineage>
</organism>
<reference key="1">
    <citation type="journal article" date="2002" name="Lancet">
        <title>Genome and virulence determinants of high virulence community-acquired MRSA.</title>
        <authorList>
            <person name="Baba T."/>
            <person name="Takeuchi F."/>
            <person name="Kuroda M."/>
            <person name="Yuzawa H."/>
            <person name="Aoki K."/>
            <person name="Oguchi A."/>
            <person name="Nagai Y."/>
            <person name="Iwama N."/>
            <person name="Asano K."/>
            <person name="Naimi T."/>
            <person name="Kuroda H."/>
            <person name="Cui L."/>
            <person name="Yamamoto K."/>
            <person name="Hiramatsu K."/>
        </authorList>
    </citation>
    <scope>NUCLEOTIDE SEQUENCE [LARGE SCALE GENOMIC DNA]</scope>
    <source>
        <strain>MW2</strain>
    </source>
</reference>
<accession>Q8NW56</accession>
<keyword id="KW-0378">Hydrolase</keyword>
<evidence type="ECO:0000255" key="1">
    <source>
        <dbReference type="HAMAP-Rule" id="MF_00457"/>
    </source>
</evidence>
<evidence type="ECO:0000305" key="2"/>
<protein>
    <recommendedName>
        <fullName evidence="1">UPF0173 metal-dependent hydrolase MW1650</fullName>
    </recommendedName>
</protein>
<gene>
    <name type="ordered locus">MW1650</name>
</gene>
<comment type="similarity">
    <text evidence="1">Belongs to the UPF0173 family.</text>
</comment>
<comment type="sequence caution" evidence="2">
    <conflict type="erroneous initiation">
        <sequence resource="EMBL-CDS" id="BAB95515"/>
    </conflict>
</comment>
<proteinExistence type="inferred from homology"/>